<feature type="chain" id="PRO_1000097068" description="Pantothenate synthetase">
    <location>
        <begin position="1"/>
        <end position="261"/>
    </location>
</feature>
<feature type="active site" description="Proton donor" evidence="1">
    <location>
        <position position="36"/>
    </location>
</feature>
<feature type="binding site" evidence="1">
    <location>
        <begin position="29"/>
        <end position="36"/>
    </location>
    <ligand>
        <name>ATP</name>
        <dbReference type="ChEBI" id="CHEBI:30616"/>
    </ligand>
</feature>
<feature type="binding site" evidence="1">
    <location>
        <position position="60"/>
    </location>
    <ligand>
        <name>(R)-pantoate</name>
        <dbReference type="ChEBI" id="CHEBI:15980"/>
    </ligand>
</feature>
<feature type="binding site" evidence="1">
    <location>
        <position position="60"/>
    </location>
    <ligand>
        <name>beta-alanine</name>
        <dbReference type="ChEBI" id="CHEBI:57966"/>
    </ligand>
</feature>
<feature type="binding site" evidence="1">
    <location>
        <begin position="147"/>
        <end position="150"/>
    </location>
    <ligand>
        <name>ATP</name>
        <dbReference type="ChEBI" id="CHEBI:30616"/>
    </ligand>
</feature>
<feature type="binding site" evidence="1">
    <location>
        <position position="153"/>
    </location>
    <ligand>
        <name>(R)-pantoate</name>
        <dbReference type="ChEBI" id="CHEBI:15980"/>
    </ligand>
</feature>
<feature type="binding site" evidence="1">
    <location>
        <begin position="184"/>
        <end position="187"/>
    </location>
    <ligand>
        <name>ATP</name>
        <dbReference type="ChEBI" id="CHEBI:30616"/>
    </ligand>
</feature>
<gene>
    <name evidence="1" type="primary">panC</name>
    <name type="ordered locus">FTM_0634</name>
</gene>
<accession>B2SFS8</accession>
<sequence length="261" mass="29728">MIIADNIKQFHSIRNSLIKQQKIGFVPTMGALHNGHISLIKKAKSENDVVIVSIFVNPTQFNNPNDYQTYPNQLQQDIQILASLDVDVLFNPSEKDIYPDGNLLRIEPKLEIANILEGKSRPGHFSGMLTVILKLLQITKPNNLYLGEKDYQQVMLIKQLVKDFFINTKIIVCPTQRQPSGLPLSSRNKNLTSTDIEIANKIYEILRQDNFSNLEELTNKINSTGAKLQYIQKLNNRIFLAFYIGKVRLIDNFLKETGPSC</sequence>
<proteinExistence type="inferred from homology"/>
<organism>
    <name type="scientific">Francisella tularensis subsp. mediasiatica (strain FSC147)</name>
    <dbReference type="NCBI Taxonomy" id="441952"/>
    <lineage>
        <taxon>Bacteria</taxon>
        <taxon>Pseudomonadati</taxon>
        <taxon>Pseudomonadota</taxon>
        <taxon>Gammaproteobacteria</taxon>
        <taxon>Thiotrichales</taxon>
        <taxon>Francisellaceae</taxon>
        <taxon>Francisella</taxon>
    </lineage>
</organism>
<protein>
    <recommendedName>
        <fullName evidence="1">Pantothenate synthetase</fullName>
        <shortName evidence="1">PS</shortName>
        <ecNumber evidence="1">6.3.2.1</ecNumber>
    </recommendedName>
    <alternativeName>
        <fullName evidence="1">Pantoate--beta-alanine ligase</fullName>
    </alternativeName>
    <alternativeName>
        <fullName evidence="1">Pantoate-activating enzyme</fullName>
    </alternativeName>
</protein>
<name>PANC_FRATM</name>
<keyword id="KW-0067">ATP-binding</keyword>
<keyword id="KW-0963">Cytoplasm</keyword>
<keyword id="KW-0436">Ligase</keyword>
<keyword id="KW-0547">Nucleotide-binding</keyword>
<keyword id="KW-0566">Pantothenate biosynthesis</keyword>
<comment type="function">
    <text evidence="1">Catalyzes the condensation of pantoate with beta-alanine in an ATP-dependent reaction via a pantoyl-adenylate intermediate.</text>
</comment>
<comment type="catalytic activity">
    <reaction evidence="1">
        <text>(R)-pantoate + beta-alanine + ATP = (R)-pantothenate + AMP + diphosphate + H(+)</text>
        <dbReference type="Rhea" id="RHEA:10912"/>
        <dbReference type="ChEBI" id="CHEBI:15378"/>
        <dbReference type="ChEBI" id="CHEBI:15980"/>
        <dbReference type="ChEBI" id="CHEBI:29032"/>
        <dbReference type="ChEBI" id="CHEBI:30616"/>
        <dbReference type="ChEBI" id="CHEBI:33019"/>
        <dbReference type="ChEBI" id="CHEBI:57966"/>
        <dbReference type="ChEBI" id="CHEBI:456215"/>
        <dbReference type="EC" id="6.3.2.1"/>
    </reaction>
</comment>
<comment type="pathway">
    <text evidence="1">Cofactor biosynthesis; (R)-pantothenate biosynthesis; (R)-pantothenate from (R)-pantoate and beta-alanine: step 1/1.</text>
</comment>
<comment type="subunit">
    <text evidence="1">Homodimer.</text>
</comment>
<comment type="subcellular location">
    <subcellularLocation>
        <location evidence="1">Cytoplasm</location>
    </subcellularLocation>
</comment>
<comment type="miscellaneous">
    <text evidence="1">The reaction proceeds by a bi uni uni bi ping pong mechanism.</text>
</comment>
<comment type="similarity">
    <text evidence="1">Belongs to the pantothenate synthetase family.</text>
</comment>
<dbReference type="EC" id="6.3.2.1" evidence="1"/>
<dbReference type="EMBL" id="CP000915">
    <property type="protein sequence ID" value="ACD30621.1"/>
    <property type="molecule type" value="Genomic_DNA"/>
</dbReference>
<dbReference type="SMR" id="B2SFS8"/>
<dbReference type="KEGG" id="ftm:FTM_0634"/>
<dbReference type="HOGENOM" id="CLU_047148_0_2_6"/>
<dbReference type="UniPathway" id="UPA00028">
    <property type="reaction ID" value="UER00005"/>
</dbReference>
<dbReference type="GO" id="GO:0005829">
    <property type="term" value="C:cytosol"/>
    <property type="evidence" value="ECO:0007669"/>
    <property type="project" value="TreeGrafter"/>
</dbReference>
<dbReference type="GO" id="GO:0005524">
    <property type="term" value="F:ATP binding"/>
    <property type="evidence" value="ECO:0007669"/>
    <property type="project" value="UniProtKB-KW"/>
</dbReference>
<dbReference type="GO" id="GO:0004592">
    <property type="term" value="F:pantoate-beta-alanine ligase activity"/>
    <property type="evidence" value="ECO:0007669"/>
    <property type="project" value="UniProtKB-UniRule"/>
</dbReference>
<dbReference type="GO" id="GO:0015940">
    <property type="term" value="P:pantothenate biosynthetic process"/>
    <property type="evidence" value="ECO:0007669"/>
    <property type="project" value="UniProtKB-UniRule"/>
</dbReference>
<dbReference type="Gene3D" id="3.40.50.620">
    <property type="entry name" value="HUPs"/>
    <property type="match status" value="1"/>
</dbReference>
<dbReference type="Gene3D" id="3.30.1300.10">
    <property type="entry name" value="Pantoate-beta-alanine ligase, C-terminal domain"/>
    <property type="match status" value="1"/>
</dbReference>
<dbReference type="HAMAP" id="MF_00158">
    <property type="entry name" value="PanC"/>
    <property type="match status" value="1"/>
</dbReference>
<dbReference type="InterPro" id="IPR004821">
    <property type="entry name" value="Cyt_trans-like"/>
</dbReference>
<dbReference type="InterPro" id="IPR003721">
    <property type="entry name" value="Pantoate_ligase"/>
</dbReference>
<dbReference type="InterPro" id="IPR042176">
    <property type="entry name" value="Pantoate_ligase_C"/>
</dbReference>
<dbReference type="InterPro" id="IPR014729">
    <property type="entry name" value="Rossmann-like_a/b/a_fold"/>
</dbReference>
<dbReference type="NCBIfam" id="TIGR00125">
    <property type="entry name" value="cyt_tran_rel"/>
    <property type="match status" value="1"/>
</dbReference>
<dbReference type="NCBIfam" id="TIGR00018">
    <property type="entry name" value="panC"/>
    <property type="match status" value="1"/>
</dbReference>
<dbReference type="PANTHER" id="PTHR21299">
    <property type="entry name" value="CYTIDYLATE KINASE/PANTOATE-BETA-ALANINE LIGASE"/>
    <property type="match status" value="1"/>
</dbReference>
<dbReference type="PANTHER" id="PTHR21299:SF1">
    <property type="entry name" value="PANTOATE--BETA-ALANINE LIGASE"/>
    <property type="match status" value="1"/>
</dbReference>
<dbReference type="Pfam" id="PF02569">
    <property type="entry name" value="Pantoate_ligase"/>
    <property type="match status" value="1"/>
</dbReference>
<dbReference type="SUPFAM" id="SSF52374">
    <property type="entry name" value="Nucleotidylyl transferase"/>
    <property type="match status" value="1"/>
</dbReference>
<evidence type="ECO:0000255" key="1">
    <source>
        <dbReference type="HAMAP-Rule" id="MF_00158"/>
    </source>
</evidence>
<reference key="1">
    <citation type="journal article" date="2009" name="PLoS Pathog.">
        <title>Molecular evolutionary consequences of niche restriction in Francisella tularensis, a facultative intracellular pathogen.</title>
        <authorList>
            <person name="Larsson P."/>
            <person name="Elfsmark D."/>
            <person name="Svensson K."/>
            <person name="Wikstroem P."/>
            <person name="Forsman M."/>
            <person name="Brettin T."/>
            <person name="Keim P."/>
            <person name="Johansson A."/>
        </authorList>
    </citation>
    <scope>NUCLEOTIDE SEQUENCE [LARGE SCALE GENOMIC DNA]</scope>
    <source>
        <strain>FSC147</strain>
    </source>
</reference>